<protein>
    <recommendedName>
        <fullName evidence="1">Peptidase T</fullName>
        <ecNumber evidence="1">3.4.11.4</ecNumber>
    </recommendedName>
    <alternativeName>
        <fullName evidence="1">Aminotripeptidase</fullName>
        <shortName evidence="1">Tripeptidase</shortName>
    </alternativeName>
    <alternativeName>
        <fullName evidence="1">Tripeptide aminopeptidase</fullName>
    </alternativeName>
</protein>
<sequence>MISQIDKAELLERFLHYVSFHTQSKPNAKHSPSSVGQMKLAMQLQKELIQLGLENVEVSKYAVVTAFLPANDPNLTKTIGLVAHLDTSPQCSGKNVRPEVIEEYRGGDIALGIGEEFISPVYYSFMQKLVGQTLIVTDGTTLLGADNKAGIAEIMTALSILQKENIPHCNIRVAFTPDEEIGLGIHYFPMEKFSCDWAYTIDGGEVGELEYENFNAATAKVRFFGRNIHTGYAKGKMLNALTLACEFQQVFPVDEVPEKTDGKAGFYHLEDFSGDIEQVELTYLIRDFDEQNFAQRKAFIKNQVEKFNAKKGLKKPIELEIQDSYQNMYDVVKNVPQSIELADRAMKAVGIKPNHKPIRGGTDGAFLASKGLACPNIFTGGYNFHSKHELVSLQGMENTVQVIIEMLKCKDL</sequence>
<reference key="1">
    <citation type="journal article" date="2005" name="J. Bacteriol.">
        <title>Genomic sequence of an otitis media isolate of nontypeable Haemophilus influenzae: comparative study with H. influenzae serotype d, strain KW20.</title>
        <authorList>
            <person name="Harrison A."/>
            <person name="Dyer D.W."/>
            <person name="Gillaspy A."/>
            <person name="Ray W.C."/>
            <person name="Mungur R."/>
            <person name="Carson M.B."/>
            <person name="Zhong H."/>
            <person name="Gipson J."/>
            <person name="Gipson M."/>
            <person name="Johnson L.S."/>
            <person name="Lewis L."/>
            <person name="Bakaletz L.O."/>
            <person name="Munson R.S. Jr."/>
        </authorList>
    </citation>
    <scope>NUCLEOTIDE SEQUENCE [LARGE SCALE GENOMIC DNA]</scope>
    <source>
        <strain>86-028NP</strain>
    </source>
</reference>
<keyword id="KW-0031">Aminopeptidase</keyword>
<keyword id="KW-0963">Cytoplasm</keyword>
<keyword id="KW-0378">Hydrolase</keyword>
<keyword id="KW-0479">Metal-binding</keyword>
<keyword id="KW-0482">Metalloprotease</keyword>
<keyword id="KW-0645">Protease</keyword>
<keyword id="KW-0862">Zinc</keyword>
<dbReference type="EC" id="3.4.11.4" evidence="1"/>
<dbReference type="EMBL" id="CP000057">
    <property type="protein sequence ID" value="AAX88589.1"/>
    <property type="molecule type" value="Genomic_DNA"/>
</dbReference>
<dbReference type="RefSeq" id="WP_005691947.1">
    <property type="nucleotide sequence ID" value="NC_007146.2"/>
</dbReference>
<dbReference type="SMR" id="Q4QK58"/>
<dbReference type="MEROPS" id="M20.003"/>
<dbReference type="KEGG" id="hit:NTHI1818"/>
<dbReference type="HOGENOM" id="CLU_053676_0_0_6"/>
<dbReference type="Proteomes" id="UP000002525">
    <property type="component" value="Chromosome"/>
</dbReference>
<dbReference type="GO" id="GO:0005829">
    <property type="term" value="C:cytosol"/>
    <property type="evidence" value="ECO:0007669"/>
    <property type="project" value="TreeGrafter"/>
</dbReference>
<dbReference type="GO" id="GO:0008237">
    <property type="term" value="F:metallopeptidase activity"/>
    <property type="evidence" value="ECO:0007669"/>
    <property type="project" value="UniProtKB-KW"/>
</dbReference>
<dbReference type="GO" id="GO:0045148">
    <property type="term" value="F:tripeptide aminopeptidase activity"/>
    <property type="evidence" value="ECO:0007669"/>
    <property type="project" value="UniProtKB-UniRule"/>
</dbReference>
<dbReference type="GO" id="GO:0008270">
    <property type="term" value="F:zinc ion binding"/>
    <property type="evidence" value="ECO:0007669"/>
    <property type="project" value="UniProtKB-UniRule"/>
</dbReference>
<dbReference type="GO" id="GO:0043171">
    <property type="term" value="P:peptide catabolic process"/>
    <property type="evidence" value="ECO:0007669"/>
    <property type="project" value="UniProtKB-UniRule"/>
</dbReference>
<dbReference type="GO" id="GO:0006508">
    <property type="term" value="P:proteolysis"/>
    <property type="evidence" value="ECO:0007669"/>
    <property type="project" value="UniProtKB-UniRule"/>
</dbReference>
<dbReference type="CDD" id="cd03892">
    <property type="entry name" value="M20_peptT"/>
    <property type="match status" value="1"/>
</dbReference>
<dbReference type="FunFam" id="3.30.70.360:FF:000002">
    <property type="entry name" value="Peptidase T"/>
    <property type="match status" value="1"/>
</dbReference>
<dbReference type="Gene3D" id="3.30.70.360">
    <property type="match status" value="1"/>
</dbReference>
<dbReference type="Gene3D" id="3.40.630.10">
    <property type="entry name" value="Zn peptidases"/>
    <property type="match status" value="1"/>
</dbReference>
<dbReference type="HAMAP" id="MF_00550">
    <property type="entry name" value="Aminopeptidase_M20"/>
    <property type="match status" value="1"/>
</dbReference>
<dbReference type="InterPro" id="IPR001261">
    <property type="entry name" value="ArgE/DapE_CS"/>
</dbReference>
<dbReference type="InterPro" id="IPR036264">
    <property type="entry name" value="Bact_exopeptidase_dim_dom"/>
</dbReference>
<dbReference type="InterPro" id="IPR002933">
    <property type="entry name" value="Peptidase_M20"/>
</dbReference>
<dbReference type="InterPro" id="IPR011650">
    <property type="entry name" value="Peptidase_M20_dimer"/>
</dbReference>
<dbReference type="InterPro" id="IPR010161">
    <property type="entry name" value="Peptidase_M20B"/>
</dbReference>
<dbReference type="NCBIfam" id="TIGR01882">
    <property type="entry name" value="peptidase-T"/>
    <property type="match status" value="1"/>
</dbReference>
<dbReference type="NCBIfam" id="NF003976">
    <property type="entry name" value="PRK05469.1"/>
    <property type="match status" value="1"/>
</dbReference>
<dbReference type="NCBIfam" id="NF009920">
    <property type="entry name" value="PRK13381.1"/>
    <property type="match status" value="1"/>
</dbReference>
<dbReference type="PANTHER" id="PTHR42994">
    <property type="entry name" value="PEPTIDASE T"/>
    <property type="match status" value="1"/>
</dbReference>
<dbReference type="PANTHER" id="PTHR42994:SF1">
    <property type="entry name" value="PEPTIDASE T"/>
    <property type="match status" value="1"/>
</dbReference>
<dbReference type="Pfam" id="PF07687">
    <property type="entry name" value="M20_dimer"/>
    <property type="match status" value="1"/>
</dbReference>
<dbReference type="Pfam" id="PF01546">
    <property type="entry name" value="Peptidase_M20"/>
    <property type="match status" value="1"/>
</dbReference>
<dbReference type="PIRSF" id="PIRSF037215">
    <property type="entry name" value="Peptidase_M20B"/>
    <property type="match status" value="1"/>
</dbReference>
<dbReference type="SUPFAM" id="SSF55031">
    <property type="entry name" value="Bacterial exopeptidase dimerisation domain"/>
    <property type="match status" value="1"/>
</dbReference>
<dbReference type="SUPFAM" id="SSF53187">
    <property type="entry name" value="Zn-dependent exopeptidases"/>
    <property type="match status" value="1"/>
</dbReference>
<dbReference type="PROSITE" id="PS00758">
    <property type="entry name" value="ARGE_DAPE_CPG2_1"/>
    <property type="match status" value="1"/>
</dbReference>
<dbReference type="PROSITE" id="PS00759">
    <property type="entry name" value="ARGE_DAPE_CPG2_2"/>
    <property type="match status" value="1"/>
</dbReference>
<gene>
    <name evidence="1" type="primary">pepT</name>
    <name type="ordered locus">NTHI1818</name>
</gene>
<proteinExistence type="inferred from homology"/>
<accession>Q4QK58</accession>
<name>PEPT_HAEI8</name>
<organism>
    <name type="scientific">Haemophilus influenzae (strain 86-028NP)</name>
    <dbReference type="NCBI Taxonomy" id="281310"/>
    <lineage>
        <taxon>Bacteria</taxon>
        <taxon>Pseudomonadati</taxon>
        <taxon>Pseudomonadota</taxon>
        <taxon>Gammaproteobacteria</taxon>
        <taxon>Pasteurellales</taxon>
        <taxon>Pasteurellaceae</taxon>
        <taxon>Haemophilus</taxon>
    </lineage>
</organism>
<evidence type="ECO:0000255" key="1">
    <source>
        <dbReference type="HAMAP-Rule" id="MF_00550"/>
    </source>
</evidence>
<comment type="function">
    <text evidence="1">Cleaves the N-terminal amino acid of tripeptides.</text>
</comment>
<comment type="catalytic activity">
    <reaction evidence="1">
        <text>Release of the N-terminal residue from a tripeptide.</text>
        <dbReference type="EC" id="3.4.11.4"/>
    </reaction>
</comment>
<comment type="cofactor">
    <cofactor evidence="1">
        <name>Zn(2+)</name>
        <dbReference type="ChEBI" id="CHEBI:29105"/>
    </cofactor>
    <text evidence="1">Binds 2 Zn(2+) ions per subunit.</text>
</comment>
<comment type="subcellular location">
    <subcellularLocation>
        <location evidence="1">Cytoplasm</location>
    </subcellularLocation>
</comment>
<comment type="similarity">
    <text evidence="1">Belongs to the peptidase M20B family.</text>
</comment>
<feature type="chain" id="PRO_0000185299" description="Peptidase T">
    <location>
        <begin position="1"/>
        <end position="412"/>
    </location>
</feature>
<feature type="active site" evidence="1">
    <location>
        <position position="86"/>
    </location>
</feature>
<feature type="active site" description="Proton acceptor" evidence="1">
    <location>
        <position position="179"/>
    </location>
</feature>
<feature type="binding site" evidence="1">
    <location>
        <position position="84"/>
    </location>
    <ligand>
        <name>Zn(2+)</name>
        <dbReference type="ChEBI" id="CHEBI:29105"/>
        <label>1</label>
    </ligand>
</feature>
<feature type="binding site" evidence="1">
    <location>
        <position position="146"/>
    </location>
    <ligand>
        <name>Zn(2+)</name>
        <dbReference type="ChEBI" id="CHEBI:29105"/>
        <label>1</label>
    </ligand>
</feature>
<feature type="binding site" evidence="1">
    <location>
        <position position="146"/>
    </location>
    <ligand>
        <name>Zn(2+)</name>
        <dbReference type="ChEBI" id="CHEBI:29105"/>
        <label>2</label>
    </ligand>
</feature>
<feature type="binding site" evidence="1">
    <location>
        <position position="180"/>
    </location>
    <ligand>
        <name>Zn(2+)</name>
        <dbReference type="ChEBI" id="CHEBI:29105"/>
        <label>2</label>
    </ligand>
</feature>
<feature type="binding site" evidence="1">
    <location>
        <position position="202"/>
    </location>
    <ligand>
        <name>Zn(2+)</name>
        <dbReference type="ChEBI" id="CHEBI:29105"/>
        <label>1</label>
    </ligand>
</feature>
<feature type="binding site" evidence="1">
    <location>
        <position position="385"/>
    </location>
    <ligand>
        <name>Zn(2+)</name>
        <dbReference type="ChEBI" id="CHEBI:29105"/>
        <label>2</label>
    </ligand>
</feature>